<organism>
    <name type="scientific">Human immunodeficiency virus type 1 group M subtype B (isolate WMJ22)</name>
    <name type="common">HIV-1</name>
    <dbReference type="NCBI Taxonomy" id="11705"/>
    <lineage>
        <taxon>Viruses</taxon>
        <taxon>Riboviria</taxon>
        <taxon>Pararnavirae</taxon>
        <taxon>Artverviricota</taxon>
        <taxon>Revtraviricetes</taxon>
        <taxon>Ortervirales</taxon>
        <taxon>Retroviridae</taxon>
        <taxon>Orthoretrovirinae</taxon>
        <taxon>Lentivirus</taxon>
        <taxon>Human immunodeficiency virus type 1</taxon>
    </lineage>
</organism>
<dbReference type="EMBL" id="AH003669">
    <property type="protein sequence ID" value="AAB12991.1"/>
    <property type="molecule type" value="Genomic_RNA"/>
</dbReference>
<dbReference type="GO" id="GO:0005576">
    <property type="term" value="C:extracellular region"/>
    <property type="evidence" value="ECO:0007669"/>
    <property type="project" value="UniProtKB-SubCell"/>
</dbReference>
<dbReference type="GO" id="GO:0030430">
    <property type="term" value="C:host cell cytoplasm"/>
    <property type="evidence" value="ECO:0007669"/>
    <property type="project" value="UniProtKB-SubCell"/>
</dbReference>
<dbReference type="GO" id="GO:0044196">
    <property type="term" value="C:host cell nucleolus"/>
    <property type="evidence" value="ECO:0007669"/>
    <property type="project" value="UniProtKB-SubCell"/>
</dbReference>
<dbReference type="GO" id="GO:0046872">
    <property type="term" value="F:metal ion binding"/>
    <property type="evidence" value="ECO:0007669"/>
    <property type="project" value="UniProtKB-KW"/>
</dbReference>
<dbReference type="GO" id="GO:0003723">
    <property type="term" value="F:RNA binding"/>
    <property type="evidence" value="ECO:0007669"/>
    <property type="project" value="UniProtKB-KW"/>
</dbReference>
<comment type="function">
    <text evidence="2">Transcriptional activator that increases RNA Pol II processivity, thereby increasing the level of full-length viral transcripts. Recognizes a hairpin structure at the 5'-LTR of the nascent viral mRNAs referred to as the transactivation responsive RNA element (TAR) and recruits the cyclin T1-CDK9 complex (P-TEFb complex) that will in turn hyperphosphorylate the RNA polymerase II to allow efficient elongation. The CDK9 component of P-TEFb and other Tat-activated kinases hyperphosphorylate the C-terminus of RNA Pol II that becomes stabilized and much more processive. Other factors such as HTATSF1/Tat-SF1, SUPT5H/SPT5, and HTATIP2 are also important for Tat's function. Besides its effect on RNA Pol II processivity, Tat induces chromatin remodeling of proviral genes by recruiting the histone acetyltransferases (HATs) CREBBP, EP300 and PCAF to the chromatin. This also contributes to the increase in proviral transcription rate, especially when the provirus integrates in transcriptionally silent region of the host genome. To ensure maximal activation of the LTR, Tat mediates nuclear translocation of NF-kappa-B by interacting with host RELA. Through its interaction with host TBP, Tat may also modulate transcription initiation. Tat can reactivate a latently infected cell by penetrating in it and transactivating its LTR promoter. In the cytoplasm, Tat is thought to act as a translational activator of HIV-1 mRNAs.</text>
</comment>
<comment type="function">
    <text evidence="1">Extracellular circulating Tat can be endocytosed by surrounding uninfected cells via the binding to several surface receptors such as CD26, CXCR4, heparan sulfate proteoglycans (HSPG) or LDLR. Neurons are rarely infected, but they internalize Tat via their LDLR. Endosomal low pH allows Tat to cross the endosome membrane to enter the cytosol and eventually further translocate into the nucleus, thereby inducing severe cell dysfunctions ranging from cell activation to cell death. Through its interaction with nuclear HATs, Tat is potentially able to control the acetylation-dependent cellular gene expression. Tat seems to inhibit the HAT activity of KAT5/Tip60 and TAF1, and consequently modify the expression of specific cellular genes. Modulates the expression of many cellular genes involved in cell survival, proliferation or in coding for cytokines (such as IL10) or cytokine receptors. May be involved in the derepression of host interleukin IL2 expression. Mediates the activation of cyclin-dependent kinases and dysregulation of microtubule network. Tat plays a role in T-cell and neurons apoptosis. Tat induced neurotoxicity and apoptosis probably contribute to neuroAIDS. Host extracellular matrix metalloproteinase MMP1 cleaves Tat and decreases Tat's mediated neurotoxicity. Circulating Tat also acts as a chemokine-like and/or growth factor-like molecule that binds to specific receptors on the surface of the cells, affecting many cellular pathways. In the vascular system, Tat binds to ITGAV/ITGB3 and ITGA5/ITGB1 integrins dimers at the surface of endothelial cells and competes with bFGF for heparin-binding sites, leading to an excess of soluble bFGF. Binds to KDR/VEGFR-2. All these Tat-mediated effects enhance angiogenesis in Kaposi's sarcoma lesions (By similarity).</text>
</comment>
<comment type="subunit">
    <text evidence="1">Interacts with host CCNT1. Associates with the P-TEFb complex composed at least of Tat, P-TEFb (CDK9 and CCNT1), TAR RNA, RNA Pol II. Recruits the HATs CREBBP, TAF1/TFIID, EP300, PCAF and GCN5L2. Interacts with host KAT5/Tip60; this interaction targets the latter to degradation. Interacts with the host deacetylase SIRT1. Interacts with host capping enzyme RNGTT; this interaction stimulates RNGTT. Binds to host KDR, and to the host integrins ITGAV/ITGB3 and ITGA5/ITGB1. Interacts with host KPNB1/importin beta-1 without previous binding to KPNA1/importin alpha-1. Interacts with EIF2AK2. Interacts with host nucleosome assembly protein NAP1L1; this interaction may be required for the transport of Tat within the nucleus, since the two proteins interact at the nuclear rim. Interacts with host C1QBP/SF2P32; this interaction involves lysine-acetylated Tat. Interacts with the host chemokine receptors CCR2, CCR3 and CXCR4. Interacts with host DPP4/CD26; this interaction may trigger an anti-proliferative effect. Interacts with host LDLR. Interacts with the host extracellular matrix metalloproteinase MMP1. Interacts with host PRMT6; this interaction mediates Tat's methylation. Interacts with, and is ubiquitinated by MDM2/Hdm2. Interacts with host PSMC3 and HTATIP2. Interacts with STAB1; this interaction may overcome SATB1-mediated repression of IL2 and IL2RA (interleukin) in T cells by binding to the same domain than HDAC1. Interacts (when acetylated) with human CDK13, thereby increasing HIV-1 mRNA splicing and promoting the production of the doubly spliced HIV-1 protein Nef (By similarity).</text>
</comment>
<comment type="subcellular location">
    <subcellularLocation>
        <location>Host nucleus</location>
        <location>Host nucleolus</location>
    </subcellularLocation>
    <subcellularLocation>
        <location>Host cytoplasm</location>
    </subcellularLocation>
    <subcellularLocation>
        <location>Secreted</location>
    </subcellularLocation>
    <text evidence="1">Probably localizes to both nuclear and nucleolar compartments. Nuclear localization is mediated through the interaction of the nuclear localization signal with importin KPNB1. Secretion occurs through a Golgi-independent pathway. Tat is released from infected cells to the extracellular space where it remains associated to the cell membrane, or is secreted into the cerebrospinal fluid and sera. Extracellular Tat can be endocytosed by surrounding uninfected cells via binding to several receptors depending on the cell type (By similarity).</text>
</comment>
<comment type="alternative products">
    <event type="alternative splicing"/>
    <isoform>
        <id>P12509-1</id>
        <name>Long</name>
        <sequence type="displayed"/>
    </isoform>
    <isoform>
        <id>P12509-2</id>
        <name>Short</name>
        <sequence type="not described"/>
    </isoform>
</comment>
<comment type="domain">
    <text evidence="1">The transactivation domain mediates the interaction with CCNT1, GCN5L2, and MDM2.</text>
</comment>
<comment type="domain">
    <text evidence="1">The Arg-rich RNA-binding region binds the TAR RNA. This region also mediates the nuclear localization through direct binding to KPNB1 and is involved in Tat's transfer across cell membranes (protein transduction). The same region is required for the interaction with EP300, PCAF, EIF2AK2 and KDR (By similarity).</text>
</comment>
<comment type="domain">
    <text evidence="1 4">The Cys-rich region may bind 2 zinc ions (Potential). This region is involved in binding to KAT5 (By similarity).</text>
</comment>
<comment type="domain">
    <text evidence="1">The cell attachment site mediates the interaction with ITGAV/ITGB3 and ITGA5/ITGB1 integrins, leading to vascular cell migration and invasion. This interaction also provides endothelial cells with the adhesion signal they require to grow in response to mitogens (By similarity).</text>
</comment>
<comment type="PTM">
    <text evidence="1">Acetylation by EP300, CREBBP, GCN5L2/GCN5 and PCAF regulates the transactivation activity of Tat.</text>
</comment>
<comment type="PTM">
    <text evidence="1">Phosphorylated by EIF2AK2 on serine and threonine residues adjacent to the basic region important for TAR RNA binding and function. Phosphorylation of Tat by EIF2AK2 is dependent on the prior activation of EIF2AK2 by dsRNA (By similarity).</text>
</comment>
<comment type="PTM">
    <text evidence="1">Asymmetrical arginine methylation by host PRMT6 seems to diminish the transactivation capacity of Tat and affects the interaction with host CCNT1.</text>
</comment>
<comment type="PTM">
    <text evidence="1">Polyubiquitination by MDM2 does not target Tat to degradation, but activates its transactivation function and fosters interaction with CCNT1 and TAR RNA.</text>
</comment>
<comment type="miscellaneous">
    <text>Isolates WMJ1, WMJ2, and WMJ3 were obtained from blood samples sequentially taken from a two-year old Haitian who was perinatally infected by her mother.</text>
</comment>
<comment type="miscellaneous">
    <text>HIV-1 lineages are divided in three main groups, M (for Major), O (for Outlier), and N (for New, or Non-M, Non-O). The vast majority of strains found worldwide belong to the group M. Group O seems to be endemic to and largely confined to Cameroon and neighboring countries in West Central Africa, where these viruses represent a small minority of HIV-1 strains. The group N is represented by a limited number of isolates from Cameroonian persons. The group M is further subdivided in 9 clades or subtypes (A to D, F to H, J and K).</text>
</comment>
<comment type="miscellaneous">
    <molecule>Isoform Short</molecule>
    <text evidence="4">Expressed in the late stage of the infection cycle, when unspliced viral RNAs are exported to the cytoplasm by the viral Rev protein.</text>
</comment>
<comment type="similarity">
    <text evidence="4">Belongs to the lentiviruses Tat family.</text>
</comment>
<feature type="chain" id="PRO_0000085363" description="Protein Tat">
    <location>
        <begin position="1" status="less than"/>
        <end position="14"/>
    </location>
</feature>
<feature type="short sequence motif" description="Cell attachment site" evidence="3">
    <location>
        <begin position="6"/>
        <end position="8"/>
    </location>
</feature>
<feature type="non-terminal residue">
    <location>
        <position position="1"/>
    </location>
</feature>
<sequence length="14" mass="1467">PTSQPRGDPTGPKE</sequence>
<protein>
    <recommendedName>
        <fullName>Protein Tat</fullName>
    </recommendedName>
    <alternativeName>
        <fullName>Transactivating regulatory protein</fullName>
    </alternativeName>
</protein>
<proteinExistence type="inferred from homology"/>
<keyword id="KW-0007">Acetylation</keyword>
<keyword id="KW-0010">Activator</keyword>
<keyword id="KW-0014">AIDS</keyword>
<keyword id="KW-0025">Alternative splicing</keyword>
<keyword id="KW-0053">Apoptosis</keyword>
<keyword id="KW-1035">Host cytoplasm</keyword>
<keyword id="KW-1048">Host nucleus</keyword>
<keyword id="KW-0945">Host-virus interaction</keyword>
<keyword id="KW-0479">Metal-binding</keyword>
<keyword id="KW-0488">Methylation</keyword>
<keyword id="KW-0597">Phosphoprotein</keyword>
<keyword id="KW-0694">RNA-binding</keyword>
<keyword id="KW-0964">Secreted</keyword>
<keyword id="KW-0804">Transcription</keyword>
<keyword id="KW-0805">Transcription regulation</keyword>
<keyword id="KW-0832">Ubl conjugation</keyword>
<keyword id="KW-0862">Zinc</keyword>
<reference key="1">
    <citation type="journal article" date="1986" name="Science">
        <title>Genetic variation in HTLV-III/LAV over time in patients with AIDS or at risk for AIDS.</title>
        <authorList>
            <person name="Hahn B.H."/>
            <person name="Shaw G.M."/>
            <person name="Taylor M.E."/>
            <person name="Redfield R.R."/>
            <person name="Markham P.D."/>
            <person name="Salahuddin S.Z."/>
            <person name="Wong-Staal F."/>
            <person name="Gallo R.C."/>
            <person name="Parks E.S."/>
            <person name="Parks W.P."/>
        </authorList>
    </citation>
    <scope>NUCLEOTIDE SEQUENCE [GENOMIC RNA]</scope>
</reference>
<reference key="2">
    <citation type="journal article" date="2005" name="Microbes Infect.">
        <title>Decoding Tat: the biology of HIV Tat posttranslational modifications.</title>
        <authorList>
            <person name="Hetzer C."/>
            <person name="Dormeyer W."/>
            <person name="Schnolzer M."/>
            <person name="Ott M."/>
        </authorList>
    </citation>
    <scope>REVIEW</scope>
    <scope>ALTERNATIVE SPLICING</scope>
</reference>
<reference key="3">
    <citation type="journal article" date="2006" name="Front. Biosci.">
        <title>The multiple functions of HIV-1 Tat: proliferation versus apoptosis.</title>
        <authorList>
            <person name="Peruzzi F."/>
        </authorList>
    </citation>
    <scope>REVIEW</scope>
</reference>
<reference key="4">
    <citation type="journal article" date="2006" name="Microbes Infect.">
        <title>HIV tat and neurotoxicity.</title>
        <authorList>
            <person name="King J.E."/>
            <person name="Eugenin E.A."/>
            <person name="Buckner C.M."/>
            <person name="Berman J.W."/>
        </authorList>
    </citation>
    <scope>REVIEW</scope>
</reference>
<organismHost>
    <name type="scientific">Homo sapiens</name>
    <name type="common">Human</name>
    <dbReference type="NCBI Taxonomy" id="9606"/>
</organismHost>
<evidence type="ECO:0000250" key="1"/>
<evidence type="ECO:0000250" key="2">
    <source>
        <dbReference type="UniProtKB" id="P04608"/>
    </source>
</evidence>
<evidence type="ECO:0000255" key="3"/>
<evidence type="ECO:0000305" key="4"/>
<accession>P12509</accession>
<name>TAT_HV1W2</name>